<protein>
    <recommendedName>
        <fullName evidence="1">5'-deoxynucleotidase KPK_1466</fullName>
        <ecNumber evidence="1">3.1.3.89</ecNumber>
    </recommendedName>
    <alternativeName>
        <fullName evidence="1">5'-deoxyribonucleotidase</fullName>
    </alternativeName>
    <alternativeName>
        <fullName evidence="1">Nucleoside 5'-monophosphate phosphohydrolase</fullName>
    </alternativeName>
</protein>
<name>5DNU_KLEP3</name>
<sequence length="199" mass="22711">MSQSHFFAHLSRLKLINRWPLMRNVRTENVSEHSLQVAMVAHALAAIKNRKFGGQVNAERIALLAMYHDASEVLTGDLPTPVKYFNSQIAQEYKAIEKIAQQKLVDMVPDELRDIFEPLIDEHHYSEEEQSIVKQADALCAYLKCLEELSAGNNEFLLAKGRLEKTLASRRSAEMDYFMQVFVPSFQLSLDEISQDSPL</sequence>
<organism>
    <name type="scientific">Klebsiella pneumoniae (strain 342)</name>
    <dbReference type="NCBI Taxonomy" id="507522"/>
    <lineage>
        <taxon>Bacteria</taxon>
        <taxon>Pseudomonadati</taxon>
        <taxon>Pseudomonadota</taxon>
        <taxon>Gammaproteobacteria</taxon>
        <taxon>Enterobacterales</taxon>
        <taxon>Enterobacteriaceae</taxon>
        <taxon>Klebsiella/Raoultella group</taxon>
        <taxon>Klebsiella</taxon>
        <taxon>Klebsiella pneumoniae complex</taxon>
    </lineage>
</organism>
<keyword id="KW-0963">Cytoplasm</keyword>
<keyword id="KW-0378">Hydrolase</keyword>
<keyword id="KW-0479">Metal-binding</keyword>
<keyword id="KW-0547">Nucleotide-binding</keyword>
<reference key="1">
    <citation type="journal article" date="2008" name="PLoS Genet.">
        <title>Complete genome sequence of the N2-fixing broad host range endophyte Klebsiella pneumoniae 342 and virulence predictions verified in mice.</title>
        <authorList>
            <person name="Fouts D.E."/>
            <person name="Tyler H.L."/>
            <person name="DeBoy R.T."/>
            <person name="Daugherty S."/>
            <person name="Ren Q."/>
            <person name="Badger J.H."/>
            <person name="Durkin A.S."/>
            <person name="Huot H."/>
            <person name="Shrivastava S."/>
            <person name="Kothari S."/>
            <person name="Dodson R.J."/>
            <person name="Mohamoud Y."/>
            <person name="Khouri H."/>
            <person name="Roesch L.F.W."/>
            <person name="Krogfelt K.A."/>
            <person name="Struve C."/>
            <person name="Triplett E.W."/>
            <person name="Methe B.A."/>
        </authorList>
    </citation>
    <scope>NUCLEOTIDE SEQUENCE [LARGE SCALE GENOMIC DNA]</scope>
    <source>
        <strain>342</strain>
    </source>
</reference>
<accession>B5XNU9</accession>
<dbReference type="EC" id="3.1.3.89" evidence="1"/>
<dbReference type="EMBL" id="CP000964">
    <property type="protein sequence ID" value="ACI11793.1"/>
    <property type="molecule type" value="Genomic_DNA"/>
</dbReference>
<dbReference type="SMR" id="B5XNU9"/>
<dbReference type="KEGG" id="kpe:KPK_1466"/>
<dbReference type="HOGENOM" id="CLU_084784_0_0_6"/>
<dbReference type="BioCyc" id="KPNE507522:GI0B-1466-MONOMER"/>
<dbReference type="Proteomes" id="UP000001734">
    <property type="component" value="Chromosome"/>
</dbReference>
<dbReference type="GO" id="GO:0005737">
    <property type="term" value="C:cytoplasm"/>
    <property type="evidence" value="ECO:0007669"/>
    <property type="project" value="UniProtKB-SubCell"/>
</dbReference>
<dbReference type="GO" id="GO:0002953">
    <property type="term" value="F:5'-deoxynucleotidase activity"/>
    <property type="evidence" value="ECO:0007669"/>
    <property type="project" value="UniProtKB-EC"/>
</dbReference>
<dbReference type="GO" id="GO:0046872">
    <property type="term" value="F:metal ion binding"/>
    <property type="evidence" value="ECO:0007669"/>
    <property type="project" value="UniProtKB-KW"/>
</dbReference>
<dbReference type="GO" id="GO:0000166">
    <property type="term" value="F:nucleotide binding"/>
    <property type="evidence" value="ECO:0007669"/>
    <property type="project" value="UniProtKB-KW"/>
</dbReference>
<dbReference type="CDD" id="cd00077">
    <property type="entry name" value="HDc"/>
    <property type="match status" value="1"/>
</dbReference>
<dbReference type="FunFam" id="1.10.3210.10:FF:000002">
    <property type="entry name" value="Nucleotidase YfbR"/>
    <property type="match status" value="1"/>
</dbReference>
<dbReference type="Gene3D" id="1.10.3210.10">
    <property type="entry name" value="Hypothetical protein af1432"/>
    <property type="match status" value="1"/>
</dbReference>
<dbReference type="HAMAP" id="MF_01100">
    <property type="entry name" value="5DNU"/>
    <property type="match status" value="1"/>
</dbReference>
<dbReference type="InterPro" id="IPR003607">
    <property type="entry name" value="HD/PDEase_dom"/>
</dbReference>
<dbReference type="InterPro" id="IPR006674">
    <property type="entry name" value="HD_domain"/>
</dbReference>
<dbReference type="InterPro" id="IPR022971">
    <property type="entry name" value="YfbR"/>
</dbReference>
<dbReference type="InterPro" id="IPR039356">
    <property type="entry name" value="YfbR/HDDC2"/>
</dbReference>
<dbReference type="NCBIfam" id="NF003009">
    <property type="entry name" value="PRK03826.1"/>
    <property type="match status" value="1"/>
</dbReference>
<dbReference type="PANTHER" id="PTHR11845">
    <property type="entry name" value="5'-DEOXYNUCLEOTIDASE HDDC2"/>
    <property type="match status" value="1"/>
</dbReference>
<dbReference type="PANTHER" id="PTHR11845:SF13">
    <property type="entry name" value="5'-DEOXYNUCLEOTIDASE HDDC2"/>
    <property type="match status" value="1"/>
</dbReference>
<dbReference type="Pfam" id="PF12917">
    <property type="entry name" value="YfbR-like"/>
    <property type="match status" value="1"/>
</dbReference>
<dbReference type="SMART" id="SM00471">
    <property type="entry name" value="HDc"/>
    <property type="match status" value="1"/>
</dbReference>
<dbReference type="SUPFAM" id="SSF109604">
    <property type="entry name" value="HD-domain/PDEase-like"/>
    <property type="match status" value="1"/>
</dbReference>
<dbReference type="PROSITE" id="PS51831">
    <property type="entry name" value="HD"/>
    <property type="match status" value="1"/>
</dbReference>
<evidence type="ECO:0000255" key="1">
    <source>
        <dbReference type="HAMAP-Rule" id="MF_01100"/>
    </source>
</evidence>
<evidence type="ECO:0000255" key="2">
    <source>
        <dbReference type="PROSITE-ProRule" id="PRU01175"/>
    </source>
</evidence>
<proteinExistence type="inferred from homology"/>
<comment type="function">
    <text evidence="1">Catalyzes the strictly specific dephosphorylation of 2'-deoxyribonucleoside 5'-monophosphates.</text>
</comment>
<comment type="catalytic activity">
    <reaction evidence="1">
        <text>a 2'-deoxyribonucleoside 5'-phosphate + H2O = a 2'-deoxyribonucleoside + phosphate</text>
        <dbReference type="Rhea" id="RHEA:36167"/>
        <dbReference type="ChEBI" id="CHEBI:15377"/>
        <dbReference type="ChEBI" id="CHEBI:18274"/>
        <dbReference type="ChEBI" id="CHEBI:43474"/>
        <dbReference type="ChEBI" id="CHEBI:65317"/>
        <dbReference type="EC" id="3.1.3.89"/>
    </reaction>
</comment>
<comment type="cofactor">
    <cofactor evidence="1">
        <name>a divalent metal cation</name>
        <dbReference type="ChEBI" id="CHEBI:60240"/>
    </cofactor>
</comment>
<comment type="subunit">
    <text evidence="1">Homodimer.</text>
</comment>
<comment type="subcellular location">
    <subcellularLocation>
        <location evidence="1">Cytoplasm</location>
    </subcellularLocation>
</comment>
<comment type="similarity">
    <text evidence="1">Belongs to the 5DNU family.</text>
</comment>
<feature type="chain" id="PRO_1000136970" description="5'-deoxynucleotidase KPK_1466">
    <location>
        <begin position="1"/>
        <end position="199"/>
    </location>
</feature>
<feature type="domain" description="HD" evidence="2">
    <location>
        <begin position="30"/>
        <end position="142"/>
    </location>
</feature>
<feature type="binding site" evidence="1">
    <location>
        <begin position="18"/>
        <end position="19"/>
    </location>
    <ligand>
        <name>substrate</name>
    </ligand>
</feature>
<feature type="binding site" evidence="1">
    <location>
        <position position="33"/>
    </location>
    <ligand>
        <name>a divalent metal cation</name>
        <dbReference type="ChEBI" id="CHEBI:60240"/>
    </ligand>
</feature>
<feature type="binding site" evidence="1">
    <location>
        <position position="33"/>
    </location>
    <ligand>
        <name>substrate</name>
    </ligand>
</feature>
<feature type="binding site" evidence="1">
    <location>
        <position position="68"/>
    </location>
    <ligand>
        <name>a divalent metal cation</name>
        <dbReference type="ChEBI" id="CHEBI:60240"/>
    </ligand>
</feature>
<feature type="binding site" evidence="1">
    <location>
        <position position="69"/>
    </location>
    <ligand>
        <name>a divalent metal cation</name>
        <dbReference type="ChEBI" id="CHEBI:60240"/>
    </ligand>
</feature>
<feature type="binding site" evidence="1">
    <location>
        <position position="69"/>
    </location>
    <ligand>
        <name>substrate</name>
    </ligand>
</feature>
<feature type="binding site" evidence="1">
    <location>
        <begin position="77"/>
        <end position="80"/>
    </location>
    <ligand>
        <name>substrate</name>
    </ligand>
</feature>
<feature type="binding site" evidence="1">
    <location>
        <position position="137"/>
    </location>
    <ligand>
        <name>a divalent metal cation</name>
        <dbReference type="ChEBI" id="CHEBI:60240"/>
    </ligand>
</feature>
<feature type="binding site" evidence="1">
    <location>
        <position position="137"/>
    </location>
    <ligand>
        <name>substrate</name>
    </ligand>
</feature>
<feature type="site" description="Appears to be important in orienting the phosphate for catalysis" evidence="1">
    <location>
        <position position="18"/>
    </location>
</feature>
<gene>
    <name type="ordered locus">KPK_1466</name>
</gene>